<dbReference type="EMBL" id="CP000749">
    <property type="protein sequence ID" value="ABR69890.1"/>
    <property type="molecule type" value="Genomic_DNA"/>
</dbReference>
<dbReference type="SMR" id="A6VTW1"/>
<dbReference type="STRING" id="400668.Mmwyl1_0959"/>
<dbReference type="KEGG" id="mmw:Mmwyl1_0959"/>
<dbReference type="eggNOG" id="COG0378">
    <property type="taxonomic scope" value="Bacteria"/>
</dbReference>
<dbReference type="HOGENOM" id="CLU_072144_1_0_6"/>
<dbReference type="OrthoDB" id="9802035at2"/>
<dbReference type="GO" id="GO:0005737">
    <property type="term" value="C:cytoplasm"/>
    <property type="evidence" value="ECO:0007669"/>
    <property type="project" value="UniProtKB-SubCell"/>
</dbReference>
<dbReference type="GO" id="GO:0005525">
    <property type="term" value="F:GTP binding"/>
    <property type="evidence" value="ECO:0007669"/>
    <property type="project" value="UniProtKB-KW"/>
</dbReference>
<dbReference type="GO" id="GO:0003924">
    <property type="term" value="F:GTPase activity"/>
    <property type="evidence" value="ECO:0007669"/>
    <property type="project" value="InterPro"/>
</dbReference>
<dbReference type="GO" id="GO:0016151">
    <property type="term" value="F:nickel cation binding"/>
    <property type="evidence" value="ECO:0007669"/>
    <property type="project" value="UniProtKB-UniRule"/>
</dbReference>
<dbReference type="GO" id="GO:0043419">
    <property type="term" value="P:urea catabolic process"/>
    <property type="evidence" value="ECO:0007669"/>
    <property type="project" value="InterPro"/>
</dbReference>
<dbReference type="CDD" id="cd05540">
    <property type="entry name" value="UreG"/>
    <property type="match status" value="1"/>
</dbReference>
<dbReference type="FunFam" id="3.40.50.300:FF:000208">
    <property type="entry name" value="Urease accessory protein UreG"/>
    <property type="match status" value="1"/>
</dbReference>
<dbReference type="Gene3D" id="3.40.50.300">
    <property type="entry name" value="P-loop containing nucleotide triphosphate hydrolases"/>
    <property type="match status" value="1"/>
</dbReference>
<dbReference type="HAMAP" id="MF_01389">
    <property type="entry name" value="UreG"/>
    <property type="match status" value="1"/>
</dbReference>
<dbReference type="InterPro" id="IPR003495">
    <property type="entry name" value="CobW/HypB/UreG_nucleotide-bd"/>
</dbReference>
<dbReference type="InterPro" id="IPR027417">
    <property type="entry name" value="P-loop_NTPase"/>
</dbReference>
<dbReference type="InterPro" id="IPR004400">
    <property type="entry name" value="UreG"/>
</dbReference>
<dbReference type="NCBIfam" id="TIGR00101">
    <property type="entry name" value="ureG"/>
    <property type="match status" value="1"/>
</dbReference>
<dbReference type="PANTHER" id="PTHR31715">
    <property type="entry name" value="UREASE ACCESSORY PROTEIN G"/>
    <property type="match status" value="1"/>
</dbReference>
<dbReference type="PANTHER" id="PTHR31715:SF0">
    <property type="entry name" value="UREASE ACCESSORY PROTEIN G"/>
    <property type="match status" value="1"/>
</dbReference>
<dbReference type="Pfam" id="PF02492">
    <property type="entry name" value="cobW"/>
    <property type="match status" value="1"/>
</dbReference>
<dbReference type="PIRSF" id="PIRSF005624">
    <property type="entry name" value="Ni-bind_GTPase"/>
    <property type="match status" value="1"/>
</dbReference>
<dbReference type="SUPFAM" id="SSF52540">
    <property type="entry name" value="P-loop containing nucleoside triphosphate hydrolases"/>
    <property type="match status" value="1"/>
</dbReference>
<name>UREG_MARMS</name>
<accession>A6VTW1</accession>
<feature type="chain" id="PRO_1000145185" description="Urease accessory protein UreG">
    <location>
        <begin position="1"/>
        <end position="213"/>
    </location>
</feature>
<feature type="binding site" evidence="1">
    <location>
        <begin position="12"/>
        <end position="19"/>
    </location>
    <ligand>
        <name>GTP</name>
        <dbReference type="ChEBI" id="CHEBI:37565"/>
    </ligand>
</feature>
<keyword id="KW-0143">Chaperone</keyword>
<keyword id="KW-0963">Cytoplasm</keyword>
<keyword id="KW-0342">GTP-binding</keyword>
<keyword id="KW-0996">Nickel insertion</keyword>
<keyword id="KW-0547">Nucleotide-binding</keyword>
<gene>
    <name evidence="1" type="primary">ureG</name>
    <name type="ordered locus">Mmwyl1_0959</name>
</gene>
<proteinExistence type="inferred from homology"/>
<comment type="function">
    <text evidence="1">Facilitates the functional incorporation of the urease nickel metallocenter. This process requires GTP hydrolysis, probably effectuated by UreG.</text>
</comment>
<comment type="subunit">
    <text evidence="1">Homodimer. UreD, UreF and UreG form a complex that acts as a GTP-hydrolysis-dependent molecular chaperone, activating the urease apoprotein by helping to assemble the nickel containing metallocenter of UreC. The UreE protein probably delivers the nickel.</text>
</comment>
<comment type="subcellular location">
    <subcellularLocation>
        <location evidence="1">Cytoplasm</location>
    </subcellularLocation>
</comment>
<comment type="similarity">
    <text evidence="1">Belongs to the SIMIBI class G3E GTPase family. UreG subfamily.</text>
</comment>
<sequence>MKKQTLRIGVGGPVGSGKTALLRSLCSAMRDYYNIAVVTNDIYTQEDAKFLTQHEALDADRILGVETGGCPHTAIREDASMNLAAIDQLLERHGALDVVFVESGGDNLSATFSPELSDFTIYVIDVSAGDKIPRKGGPGITKSDLLIINKTDLAPLVGASLDVMAHDAKIQRGDRPFIFSNLKSAQGLDEIIQIIVSEGMLEAKEIPAAKAVV</sequence>
<evidence type="ECO:0000255" key="1">
    <source>
        <dbReference type="HAMAP-Rule" id="MF_01389"/>
    </source>
</evidence>
<reference key="1">
    <citation type="submission" date="2007-06" db="EMBL/GenBank/DDBJ databases">
        <title>Complete sequence of Marinomonas sp. MWYL1.</title>
        <authorList>
            <consortium name="US DOE Joint Genome Institute"/>
            <person name="Copeland A."/>
            <person name="Lucas S."/>
            <person name="Lapidus A."/>
            <person name="Barry K."/>
            <person name="Glavina del Rio T."/>
            <person name="Dalin E."/>
            <person name="Tice H."/>
            <person name="Pitluck S."/>
            <person name="Kiss H."/>
            <person name="Brettin T."/>
            <person name="Bruce D."/>
            <person name="Detter J.C."/>
            <person name="Han C."/>
            <person name="Schmutz J."/>
            <person name="Larimer F."/>
            <person name="Land M."/>
            <person name="Hauser L."/>
            <person name="Kyrpides N."/>
            <person name="Kim E."/>
            <person name="Johnston A.W.B."/>
            <person name="Todd J.D."/>
            <person name="Rogers R."/>
            <person name="Wexler M."/>
            <person name="Bond P.L."/>
            <person name="Li Y."/>
            <person name="Richardson P."/>
        </authorList>
    </citation>
    <scope>NUCLEOTIDE SEQUENCE [LARGE SCALE GENOMIC DNA]</scope>
    <source>
        <strain>MWYL1</strain>
    </source>
</reference>
<protein>
    <recommendedName>
        <fullName evidence="1">Urease accessory protein UreG</fullName>
    </recommendedName>
</protein>
<organism>
    <name type="scientific">Marinomonas sp. (strain MWYL1)</name>
    <dbReference type="NCBI Taxonomy" id="400668"/>
    <lineage>
        <taxon>Bacteria</taxon>
        <taxon>Pseudomonadati</taxon>
        <taxon>Pseudomonadota</taxon>
        <taxon>Gammaproteobacteria</taxon>
        <taxon>Oceanospirillales</taxon>
        <taxon>Oceanospirillaceae</taxon>
        <taxon>Marinomonas</taxon>
    </lineage>
</organism>